<protein>
    <recommendedName>
        <fullName evidence="4">N-fatty-acyl-amino acid synthase/hydrolase PM20D1</fullName>
        <ecNumber evidence="2">3.5.1.114</ecNumber>
        <ecNumber evidence="2">3.5.1.14</ecNumber>
    </recommendedName>
    <alternativeName>
        <fullName evidence="2">Peptidase M20 domain-containing protein 1</fullName>
    </alternativeName>
</protein>
<organism>
    <name type="scientific">Gallus gallus</name>
    <name type="common">Chicken</name>
    <dbReference type="NCBI Taxonomy" id="9031"/>
    <lineage>
        <taxon>Eukaryota</taxon>
        <taxon>Metazoa</taxon>
        <taxon>Chordata</taxon>
        <taxon>Craniata</taxon>
        <taxon>Vertebrata</taxon>
        <taxon>Euteleostomi</taxon>
        <taxon>Archelosauria</taxon>
        <taxon>Archosauria</taxon>
        <taxon>Dinosauria</taxon>
        <taxon>Saurischia</taxon>
        <taxon>Theropoda</taxon>
        <taxon>Coelurosauria</taxon>
        <taxon>Aves</taxon>
        <taxon>Neognathae</taxon>
        <taxon>Galloanserae</taxon>
        <taxon>Galliformes</taxon>
        <taxon>Phasianidae</taxon>
        <taxon>Phasianinae</taxon>
        <taxon>Gallus</taxon>
    </lineage>
</organism>
<feature type="signal peptide" evidence="3">
    <location>
        <begin position="1"/>
        <end position="34"/>
    </location>
</feature>
<feature type="chain" id="PRO_0000321930" description="N-fatty-acyl-amino acid synthase/hydrolase PM20D1">
    <location>
        <begin position="35"/>
        <end position="517"/>
    </location>
</feature>
<feature type="active site" evidence="1">
    <location>
        <position position="139"/>
    </location>
</feature>
<feature type="active site" description="Proton acceptor" evidence="1">
    <location>
        <position position="203"/>
    </location>
</feature>
<feature type="binding site" evidence="1">
    <location>
        <position position="137"/>
    </location>
    <ligand>
        <name>Zn(2+)</name>
        <dbReference type="ChEBI" id="CHEBI:29105"/>
        <label>2</label>
    </ligand>
</feature>
<feature type="binding site" evidence="1">
    <location>
        <position position="169"/>
    </location>
    <ligand>
        <name>Zn(2+)</name>
        <dbReference type="ChEBI" id="CHEBI:29105"/>
        <label>1</label>
    </ligand>
</feature>
<feature type="binding site" evidence="1">
    <location>
        <position position="169"/>
    </location>
    <ligand>
        <name>Zn(2+)</name>
        <dbReference type="ChEBI" id="CHEBI:29105"/>
        <label>2</label>
    </ligand>
</feature>
<feature type="binding site" evidence="1">
    <location>
        <position position="204"/>
    </location>
    <ligand>
        <name>Zn(2+)</name>
        <dbReference type="ChEBI" id="CHEBI:29105"/>
        <label>1</label>
    </ligand>
</feature>
<feature type="binding site" evidence="1">
    <location>
        <position position="230"/>
    </location>
    <ligand>
        <name>Zn(2+)</name>
        <dbReference type="ChEBI" id="CHEBI:29105"/>
        <label>2</label>
    </ligand>
</feature>
<feature type="binding site" evidence="1">
    <location>
        <position position="477"/>
    </location>
    <ligand>
        <name>Zn(2+)</name>
        <dbReference type="ChEBI" id="CHEBI:29105"/>
        <label>1</label>
    </ligand>
</feature>
<feature type="glycosylation site" description="N-linked (GlcNAc...) asparagine" evidence="3">
    <location>
        <position position="84"/>
    </location>
</feature>
<feature type="glycosylation site" description="N-linked (GlcNAc...) asparagine" evidence="3">
    <location>
        <position position="261"/>
    </location>
</feature>
<feature type="glycosylation site" description="N-linked (GlcNAc...) asparagine" evidence="3">
    <location>
        <position position="455"/>
    </location>
</feature>
<name>P20D1_CHICK</name>
<sequence>MAGGCGRRRVVVCAVALGLSAAVLALTAVVLLRAYVLRSPAIPRLWARRGSTAAFSASERRELKEALRGAVRIPTVSLSSEDFNTTAMAEFGDYIRKAFPAVFSSKFIQHEIIGEYSHLFTVQGSDSEMMPYMLLAHMDVVPAPPEGWDFPPFSAAEHEGFIYGRGTLDNKNSAIGILQALEFLLRRNYRPRRSFYVGIGHDEEVFGQKGALKIAALLESRGVKLSFLLDEGSAILDGIIAGVKKPVALIAVTEKGLMTLNFTVEKEPGHSSFPPKETSIGILATAVSRLEQNPMRSLFGRGPELMTMEHLASEFNFPLNLIMSNLWLFSPIVSRVLAWKPSTNALIRTTTAVTMFNAGIKFNVIPPSARATVNFRIHSGEKAKEVLETVRNTVADDRVKIDVIEALDPLPISPWDDQTFGVHVFQRTILDTFPNVDSVVPGTCIGNTDSRHFTNVTNAIYRFNPVLLKSDDLPRIHGLNERISVESYEKQVEFLFQLIKNCDVDKLPEPHANSHEL</sequence>
<proteinExistence type="evidence at transcript level"/>
<gene>
    <name evidence="2" type="primary">PM20D1</name>
    <name type="ORF">RCJMB04_8d17</name>
</gene>
<accession>Q5ZL18</accession>
<reference key="1">
    <citation type="journal article" date="2005" name="Genome Biol.">
        <title>Full-length cDNAs from chicken bursal lymphocytes to facilitate gene function analysis.</title>
        <authorList>
            <person name="Caldwell R.B."/>
            <person name="Kierzek A.M."/>
            <person name="Arakawa H."/>
            <person name="Bezzubov Y."/>
            <person name="Zaim J."/>
            <person name="Fiedler P."/>
            <person name="Kutter S."/>
            <person name="Blagodatski A."/>
            <person name="Kostovska D."/>
            <person name="Koter M."/>
            <person name="Plachy J."/>
            <person name="Carninci P."/>
            <person name="Hayashizaki Y."/>
            <person name="Buerstedde J.-M."/>
        </authorList>
    </citation>
    <scope>NUCLEOTIDE SEQUENCE [LARGE SCALE MRNA]</scope>
    <source>
        <strain>CB</strain>
        <tissue>Bursa of Fabricius</tissue>
    </source>
</reference>
<comment type="function">
    <text evidence="2">Secreted enzyme that regulates the endogenous N-fatty acyl amino acid (NAAs) tissue and circulating levels by functioning as a bidirectional NAA synthase/hydrolase. It condenses free fatty acids and free amino acids to generate NAAs and bidirectionally catalyzes the reverse hydrolysis reaction. Some of these NAAs stimulate oxidative metabolism via mitochondrial uncoupling, increasing energy expenditure in a UPC1-independent manner. Thereby, this secreted protein may indirectly regulate whole body energy expenditure. PM20D1 circulates in tight association with both low- and high-density (LDL and HDL,respectively) lipoprotein particles.</text>
</comment>
<comment type="catalytic activity">
    <reaction evidence="2">
        <text>an N-acyl-L-amino acid + H2O = an L-alpha-amino acid + a carboxylate</text>
        <dbReference type="Rhea" id="RHEA:15565"/>
        <dbReference type="ChEBI" id="CHEBI:15377"/>
        <dbReference type="ChEBI" id="CHEBI:29067"/>
        <dbReference type="ChEBI" id="CHEBI:59869"/>
        <dbReference type="ChEBI" id="CHEBI:59874"/>
        <dbReference type="EC" id="3.5.1.14"/>
    </reaction>
    <physiologicalReaction direction="left-to-right" evidence="2">
        <dbReference type="Rhea" id="RHEA:15566"/>
    </physiologicalReaction>
    <physiologicalReaction direction="right-to-left" evidence="2">
        <dbReference type="Rhea" id="RHEA:15567"/>
    </physiologicalReaction>
</comment>
<comment type="catalytic activity">
    <reaction evidence="2">
        <text>an N-acyl-aromatic L-alpha-amino acid + H2O = an aromatic L-alpha-amino acid + a carboxylate</text>
        <dbReference type="Rhea" id="RHEA:54184"/>
        <dbReference type="ChEBI" id="CHEBI:15377"/>
        <dbReference type="ChEBI" id="CHEBI:29067"/>
        <dbReference type="ChEBI" id="CHEBI:84824"/>
        <dbReference type="ChEBI" id="CHEBI:138093"/>
        <dbReference type="EC" id="3.5.1.114"/>
    </reaction>
    <physiologicalReaction direction="left-to-right" evidence="2">
        <dbReference type="Rhea" id="RHEA:54185"/>
    </physiologicalReaction>
    <physiologicalReaction direction="right-to-left" evidence="2">
        <dbReference type="Rhea" id="RHEA:54186"/>
    </physiologicalReaction>
</comment>
<comment type="catalytic activity">
    <reaction evidence="2">
        <text>N-(5Z,8Z,11Z,14Z)-eicosatetraenoyl-glycine + H2O = (5Z,8Z,11Z,14Z)-eicosatetraenoate + glycine</text>
        <dbReference type="Rhea" id="RHEA:64108"/>
        <dbReference type="ChEBI" id="CHEBI:15377"/>
        <dbReference type="ChEBI" id="CHEBI:32395"/>
        <dbReference type="ChEBI" id="CHEBI:57305"/>
        <dbReference type="ChEBI" id="CHEBI:59002"/>
    </reaction>
    <physiologicalReaction direction="left-to-right" evidence="2">
        <dbReference type="Rhea" id="RHEA:64109"/>
    </physiologicalReaction>
    <physiologicalReaction direction="right-to-left" evidence="2">
        <dbReference type="Rhea" id="RHEA:64110"/>
    </physiologicalReaction>
</comment>
<comment type="catalytic activity">
    <reaction evidence="2">
        <text>N-hexadecanoyl-L-phenylalanine + H2O = hexadecanoate + L-phenylalanine</text>
        <dbReference type="Rhea" id="RHEA:64124"/>
        <dbReference type="ChEBI" id="CHEBI:7896"/>
        <dbReference type="ChEBI" id="CHEBI:15377"/>
        <dbReference type="ChEBI" id="CHEBI:58095"/>
        <dbReference type="ChEBI" id="CHEBI:149699"/>
    </reaction>
    <physiologicalReaction direction="left-to-right" evidence="2">
        <dbReference type="Rhea" id="RHEA:64125"/>
    </physiologicalReaction>
</comment>
<comment type="catalytic activity">
    <reaction evidence="2">
        <text>N-octadecanoyl-L-phenylalanine + H2O = octadecanoate + L-phenylalanine</text>
        <dbReference type="Rhea" id="RHEA:64128"/>
        <dbReference type="ChEBI" id="CHEBI:15377"/>
        <dbReference type="ChEBI" id="CHEBI:25629"/>
        <dbReference type="ChEBI" id="CHEBI:58095"/>
        <dbReference type="ChEBI" id="CHEBI:149700"/>
    </reaction>
    <physiologicalReaction direction="left-to-right" evidence="2">
        <dbReference type="Rhea" id="RHEA:64129"/>
    </physiologicalReaction>
</comment>
<comment type="catalytic activity">
    <reaction evidence="2">
        <text>N-(4Z,7Z,10Z,13Z,16Z,19Z-docosahexaenoyl)-L-phenylalanine + H2O = (4Z,7Z,10Z,13Z,16Z,19Z)-docosahexaenoate + L-phenylalanine</text>
        <dbReference type="Rhea" id="RHEA:64132"/>
        <dbReference type="ChEBI" id="CHEBI:15377"/>
        <dbReference type="ChEBI" id="CHEBI:58095"/>
        <dbReference type="ChEBI" id="CHEBI:77016"/>
        <dbReference type="ChEBI" id="CHEBI:149701"/>
    </reaction>
    <physiologicalReaction direction="left-to-right" evidence="2">
        <dbReference type="Rhea" id="RHEA:64133"/>
    </physiologicalReaction>
</comment>
<comment type="catalytic activity">
    <reaction evidence="2">
        <text>N-(9Z-octadecenoyl)-L-asparagine + H2O = L-asparagine + (9Z)-octadecenoate</text>
        <dbReference type="Rhea" id="RHEA:64136"/>
        <dbReference type="ChEBI" id="CHEBI:15377"/>
        <dbReference type="ChEBI" id="CHEBI:30823"/>
        <dbReference type="ChEBI" id="CHEBI:58048"/>
        <dbReference type="ChEBI" id="CHEBI:149730"/>
    </reaction>
    <physiologicalReaction direction="left-to-right" evidence="2">
        <dbReference type="Rhea" id="RHEA:64137"/>
    </physiologicalReaction>
</comment>
<comment type="catalytic activity">
    <reaction evidence="2">
        <text>(9Z)-octadecenoate + glycine = N-(9Z-octadecenoyl)glycine + H2O</text>
        <dbReference type="Rhea" id="RHEA:51316"/>
        <dbReference type="ChEBI" id="CHEBI:15377"/>
        <dbReference type="ChEBI" id="CHEBI:30823"/>
        <dbReference type="ChEBI" id="CHEBI:57305"/>
        <dbReference type="ChEBI" id="CHEBI:133992"/>
    </reaction>
    <physiologicalReaction direction="right-to-left" evidence="2">
        <dbReference type="Rhea" id="RHEA:51318"/>
    </physiologicalReaction>
</comment>
<comment type="catalytic activity">
    <reaction evidence="2">
        <text>N-(9Z-octadecenoyl)-L-lysine + H2O = L-lysine + (9Z)-octadecenoate</text>
        <dbReference type="Rhea" id="RHEA:64192"/>
        <dbReference type="ChEBI" id="CHEBI:15377"/>
        <dbReference type="ChEBI" id="CHEBI:30823"/>
        <dbReference type="ChEBI" id="CHEBI:32551"/>
        <dbReference type="ChEBI" id="CHEBI:149731"/>
    </reaction>
    <physiologicalReaction direction="left-to-right" evidence="2">
        <dbReference type="Rhea" id="RHEA:64193"/>
    </physiologicalReaction>
</comment>
<comment type="catalytic activity">
    <reaction evidence="2">
        <text>N-(9Z-octadecenoyl)-L-methionine + H2O = (9Z)-octadecenoate + L-methionine</text>
        <dbReference type="Rhea" id="RHEA:64144"/>
        <dbReference type="ChEBI" id="CHEBI:15377"/>
        <dbReference type="ChEBI" id="CHEBI:30823"/>
        <dbReference type="ChEBI" id="CHEBI:57844"/>
        <dbReference type="ChEBI" id="CHEBI:149732"/>
    </reaction>
    <physiologicalReaction direction="left-to-right" evidence="2">
        <dbReference type="Rhea" id="RHEA:64145"/>
    </physiologicalReaction>
</comment>
<comment type="catalytic activity">
    <reaction evidence="2">
        <text>N-(9Z-octadecenoyl)-L-serine + H2O = L-serine + (9Z)-octadecenoate</text>
        <dbReference type="Rhea" id="RHEA:51352"/>
        <dbReference type="ChEBI" id="CHEBI:15377"/>
        <dbReference type="ChEBI" id="CHEBI:30823"/>
        <dbReference type="ChEBI" id="CHEBI:33384"/>
        <dbReference type="ChEBI" id="CHEBI:134031"/>
    </reaction>
    <physiologicalReaction direction="left-to-right" evidence="2">
        <dbReference type="Rhea" id="RHEA:51353"/>
    </physiologicalReaction>
</comment>
<comment type="catalytic activity">
    <reaction evidence="2">
        <text>N-(9Z-octadecenoyl)-L-tryptophan + H2O = L-tryptophan + (9Z)-octadecenoate</text>
        <dbReference type="Rhea" id="RHEA:64176"/>
        <dbReference type="ChEBI" id="CHEBI:15377"/>
        <dbReference type="ChEBI" id="CHEBI:30823"/>
        <dbReference type="ChEBI" id="CHEBI:57912"/>
        <dbReference type="ChEBI" id="CHEBI:149733"/>
    </reaction>
    <physiologicalReaction direction="left-to-right" evidence="2">
        <dbReference type="Rhea" id="RHEA:64177"/>
    </physiologicalReaction>
</comment>
<comment type="catalytic activity">
    <reaction evidence="2">
        <text>N-(9Z-octadecenoyl)-L-tyrosine + H2O = L-tyrosine + (9Z)-octadecenoate</text>
        <dbReference type="Rhea" id="RHEA:64184"/>
        <dbReference type="ChEBI" id="CHEBI:15377"/>
        <dbReference type="ChEBI" id="CHEBI:30823"/>
        <dbReference type="ChEBI" id="CHEBI:58315"/>
        <dbReference type="ChEBI" id="CHEBI:149734"/>
    </reaction>
    <physiologicalReaction direction="left-to-right" evidence="2">
        <dbReference type="Rhea" id="RHEA:64185"/>
    </physiologicalReaction>
</comment>
<comment type="catalytic activity">
    <reaction evidence="2">
        <text>N-(9Z-octadecenoyl)-L-glutamine + H2O = L-glutamine + (9Z)-octadecenoate</text>
        <dbReference type="Rhea" id="RHEA:51356"/>
        <dbReference type="ChEBI" id="CHEBI:15377"/>
        <dbReference type="ChEBI" id="CHEBI:30823"/>
        <dbReference type="ChEBI" id="CHEBI:58359"/>
        <dbReference type="ChEBI" id="CHEBI:134033"/>
    </reaction>
    <physiologicalReaction direction="left-to-right" evidence="2">
        <dbReference type="Rhea" id="RHEA:51357"/>
    </physiologicalReaction>
</comment>
<comment type="catalytic activity">
    <reaction evidence="2">
        <text>N-(5Z,8Z,11Z,14Z-eicosatetraenoyl)-L-serine + H2O = (5Z,8Z,11Z,14Z)-eicosatetraenoate + L-serine</text>
        <dbReference type="Rhea" id="RHEA:64116"/>
        <dbReference type="ChEBI" id="CHEBI:15377"/>
        <dbReference type="ChEBI" id="CHEBI:32395"/>
        <dbReference type="ChEBI" id="CHEBI:33384"/>
        <dbReference type="ChEBI" id="CHEBI:149697"/>
    </reaction>
    <physiologicalReaction direction="left-to-right" evidence="2">
        <dbReference type="Rhea" id="RHEA:64117"/>
    </physiologicalReaction>
    <physiologicalReaction direction="right-to-left" evidence="2">
        <dbReference type="Rhea" id="RHEA:64118"/>
    </physiologicalReaction>
</comment>
<comment type="catalytic activity">
    <reaction evidence="2">
        <text>(5Z,8Z,11Z,14Z)-eicosatetraenoate + L-phenylalanine = N-(5Z,8Z,11Z,14Z-eicosatetraenoyl)-L-phenylalanine + H2O</text>
        <dbReference type="Rhea" id="RHEA:51312"/>
        <dbReference type="ChEBI" id="CHEBI:15377"/>
        <dbReference type="ChEBI" id="CHEBI:32395"/>
        <dbReference type="ChEBI" id="CHEBI:58095"/>
        <dbReference type="ChEBI" id="CHEBI:134022"/>
    </reaction>
    <physiologicalReaction direction="left-to-right" evidence="2">
        <dbReference type="Rhea" id="RHEA:51313"/>
    </physiologicalReaction>
    <physiologicalReaction direction="right-to-left" evidence="2">
        <dbReference type="Rhea" id="RHEA:51314"/>
    </physiologicalReaction>
</comment>
<comment type="catalytic activity">
    <reaction evidence="2">
        <text>N-(9Z-octadecenoyl)-L-leucine + H2O = L-leucine + (9Z)-octadecenoate</text>
        <dbReference type="Rhea" id="RHEA:51360"/>
        <dbReference type="ChEBI" id="CHEBI:15377"/>
        <dbReference type="ChEBI" id="CHEBI:30823"/>
        <dbReference type="ChEBI" id="CHEBI:57427"/>
        <dbReference type="ChEBI" id="CHEBI:134035"/>
    </reaction>
    <physiologicalReaction direction="left-to-right" evidence="2">
        <dbReference type="Rhea" id="RHEA:51361"/>
    </physiologicalReaction>
    <physiologicalReaction direction="right-to-left" evidence="2">
        <dbReference type="Rhea" id="RHEA:51362"/>
    </physiologicalReaction>
</comment>
<comment type="catalytic activity">
    <reaction evidence="2">
        <text>L-phenylalanine + (9Z)-octadecenoate = N-(9Z-octadecenoyl)-L-phenylalanine + H2O</text>
        <dbReference type="Rhea" id="RHEA:51300"/>
        <dbReference type="ChEBI" id="CHEBI:15377"/>
        <dbReference type="ChEBI" id="CHEBI:30823"/>
        <dbReference type="ChEBI" id="CHEBI:58095"/>
        <dbReference type="ChEBI" id="CHEBI:134020"/>
    </reaction>
    <physiologicalReaction direction="left-to-right" evidence="2">
        <dbReference type="Rhea" id="RHEA:51301"/>
    </physiologicalReaction>
    <physiologicalReaction direction="right-to-left" evidence="2">
        <dbReference type="Rhea" id="RHEA:51302"/>
    </physiologicalReaction>
</comment>
<comment type="cofactor">
    <cofactor evidence="1">
        <name>Zn(2+)</name>
        <dbReference type="ChEBI" id="CHEBI:29105"/>
    </cofactor>
    <text evidence="1">Binds 2 Zn(2+) ions per subunit.</text>
</comment>
<comment type="activity regulation">
    <text evidence="2">Lipoproteins are powerful coactivators of PM20D1 activity in vitro and NAA biosynthesis in vivo.</text>
</comment>
<comment type="pathway">
    <text evidence="2">Amino-acid metabolism.</text>
</comment>
<comment type="pathway">
    <text evidence="2">Energy metabolism; electron transfer.</text>
</comment>
<comment type="pathway">
    <text evidence="2">Lipid metabolism; fatty acid metabolism.</text>
</comment>
<comment type="subcellular location">
    <subcellularLocation>
        <location evidence="2">Secreted</location>
    </subcellularLocation>
</comment>
<comment type="similarity">
    <text evidence="4">Belongs to the peptidase M20A family.</text>
</comment>
<keyword id="KW-0325">Glycoprotein</keyword>
<keyword id="KW-0378">Hydrolase</keyword>
<keyword id="KW-0443">Lipid metabolism</keyword>
<keyword id="KW-0456">Lyase</keyword>
<keyword id="KW-0479">Metal-binding</keyword>
<keyword id="KW-0645">Protease</keyword>
<keyword id="KW-1185">Reference proteome</keyword>
<keyword id="KW-0964">Secreted</keyword>
<keyword id="KW-0732">Signal</keyword>
<keyword id="KW-0862">Zinc</keyword>
<evidence type="ECO:0000250" key="1"/>
<evidence type="ECO:0000250" key="2">
    <source>
        <dbReference type="UniProtKB" id="Q8C165"/>
    </source>
</evidence>
<evidence type="ECO:0000255" key="3"/>
<evidence type="ECO:0000305" key="4"/>
<dbReference type="EC" id="3.5.1.114" evidence="2"/>
<dbReference type="EC" id="3.5.1.14" evidence="2"/>
<dbReference type="EMBL" id="AJ719916">
    <property type="protein sequence ID" value="CAG31575.1"/>
    <property type="molecule type" value="mRNA"/>
</dbReference>
<dbReference type="RefSeq" id="NP_001026086.1">
    <property type="nucleotide sequence ID" value="NM_001030915.1"/>
</dbReference>
<dbReference type="SMR" id="Q5ZL18"/>
<dbReference type="FunCoup" id="Q5ZL18">
    <property type="interactions" value="23"/>
</dbReference>
<dbReference type="STRING" id="9031.ENSGALP00000070430"/>
<dbReference type="GlyCosmos" id="Q5ZL18">
    <property type="glycosylation" value="3 sites, No reported glycans"/>
</dbReference>
<dbReference type="GlyGen" id="Q5ZL18">
    <property type="glycosylation" value="3 sites"/>
</dbReference>
<dbReference type="PaxDb" id="9031-ENSGALP00000001025"/>
<dbReference type="GeneID" id="419838"/>
<dbReference type="KEGG" id="gga:419838"/>
<dbReference type="CTD" id="148811"/>
<dbReference type="VEuPathDB" id="HostDB:geneid_419838"/>
<dbReference type="eggNOG" id="KOG2275">
    <property type="taxonomic scope" value="Eukaryota"/>
</dbReference>
<dbReference type="InParanoid" id="Q5ZL18"/>
<dbReference type="OrthoDB" id="3064516at2759"/>
<dbReference type="PhylomeDB" id="Q5ZL18"/>
<dbReference type="UniPathway" id="UPA00092"/>
<dbReference type="UniPathway" id="UPA00199"/>
<dbReference type="PRO" id="PR:Q5ZL18"/>
<dbReference type="Proteomes" id="UP000000539">
    <property type="component" value="Unassembled WGS sequence"/>
</dbReference>
<dbReference type="GO" id="GO:0005615">
    <property type="term" value="C:extracellular space"/>
    <property type="evidence" value="ECO:0000250"/>
    <property type="project" value="UniProtKB"/>
</dbReference>
<dbReference type="GO" id="GO:0004046">
    <property type="term" value="F:aminoacylase activity"/>
    <property type="evidence" value="ECO:0007669"/>
    <property type="project" value="UniProtKB-EC"/>
</dbReference>
<dbReference type="GO" id="GO:0016811">
    <property type="term" value="F:hydrolase activity, acting on carbon-nitrogen (but not peptide) bonds, in linear amides"/>
    <property type="evidence" value="ECO:0000250"/>
    <property type="project" value="UniProtKB"/>
</dbReference>
<dbReference type="GO" id="GO:0016829">
    <property type="term" value="F:lyase activity"/>
    <property type="evidence" value="ECO:0007669"/>
    <property type="project" value="UniProtKB-KW"/>
</dbReference>
<dbReference type="GO" id="GO:0046872">
    <property type="term" value="F:metal ion binding"/>
    <property type="evidence" value="ECO:0007669"/>
    <property type="project" value="UniProtKB-KW"/>
</dbReference>
<dbReference type="GO" id="GO:0008233">
    <property type="term" value="F:peptidase activity"/>
    <property type="evidence" value="ECO:0007669"/>
    <property type="project" value="UniProtKB-KW"/>
</dbReference>
<dbReference type="GO" id="GO:1990845">
    <property type="term" value="P:adaptive thermogenesis"/>
    <property type="evidence" value="ECO:0000250"/>
    <property type="project" value="UniProtKB"/>
</dbReference>
<dbReference type="GO" id="GO:0043604">
    <property type="term" value="P:amide biosynthetic process"/>
    <property type="evidence" value="ECO:0000250"/>
    <property type="project" value="UniProtKB"/>
</dbReference>
<dbReference type="GO" id="GO:0043605">
    <property type="term" value="P:amide catabolic process"/>
    <property type="evidence" value="ECO:0000250"/>
    <property type="project" value="UniProtKB"/>
</dbReference>
<dbReference type="GO" id="GO:0006520">
    <property type="term" value="P:amino acid metabolic process"/>
    <property type="evidence" value="ECO:0000250"/>
    <property type="project" value="UniProtKB"/>
</dbReference>
<dbReference type="GO" id="GO:0097009">
    <property type="term" value="P:energy homeostasis"/>
    <property type="evidence" value="ECO:0000250"/>
    <property type="project" value="UniProtKB"/>
</dbReference>
<dbReference type="GO" id="GO:0006631">
    <property type="term" value="P:fatty acid metabolic process"/>
    <property type="evidence" value="ECO:0007669"/>
    <property type="project" value="UniProtKB-UniPathway"/>
</dbReference>
<dbReference type="GO" id="GO:0006629">
    <property type="term" value="P:lipid metabolic process"/>
    <property type="evidence" value="ECO:0000250"/>
    <property type="project" value="UniProtKB"/>
</dbReference>
<dbReference type="GO" id="GO:0006508">
    <property type="term" value="P:proteolysis"/>
    <property type="evidence" value="ECO:0007669"/>
    <property type="project" value="UniProtKB-KW"/>
</dbReference>
<dbReference type="GO" id="GO:0022904">
    <property type="term" value="P:respiratory electron transport chain"/>
    <property type="evidence" value="ECO:0007669"/>
    <property type="project" value="UniProtKB-UniPathway"/>
</dbReference>
<dbReference type="CDD" id="cd05674">
    <property type="entry name" value="M20_yscS"/>
    <property type="match status" value="1"/>
</dbReference>
<dbReference type="FunFam" id="1.10.150.900:FF:000003">
    <property type="entry name" value="N-fatty-acyl-amino acid synthase/hydrolase PM20D1"/>
    <property type="match status" value="1"/>
</dbReference>
<dbReference type="FunFam" id="3.40.630.10:FF:000027">
    <property type="entry name" value="N-fatty-acyl-amino acid synthase/hydrolase PM20D1"/>
    <property type="match status" value="1"/>
</dbReference>
<dbReference type="Gene3D" id="1.10.150.900">
    <property type="match status" value="1"/>
</dbReference>
<dbReference type="Gene3D" id="3.30.70.360">
    <property type="match status" value="1"/>
</dbReference>
<dbReference type="Gene3D" id="3.40.630.10">
    <property type="entry name" value="Zn peptidases"/>
    <property type="match status" value="1"/>
</dbReference>
<dbReference type="InterPro" id="IPR036264">
    <property type="entry name" value="Bact_exopeptidase_dim_dom"/>
</dbReference>
<dbReference type="InterPro" id="IPR047177">
    <property type="entry name" value="Pept_M20A"/>
</dbReference>
<dbReference type="InterPro" id="IPR002933">
    <property type="entry name" value="Peptidase_M20"/>
</dbReference>
<dbReference type="InterPro" id="IPR011650">
    <property type="entry name" value="Peptidase_M20_dimer"/>
</dbReference>
<dbReference type="PANTHER" id="PTHR45962">
    <property type="entry name" value="N-FATTY-ACYL-AMINO ACID SYNTHASE/HYDROLASE PM20D1"/>
    <property type="match status" value="1"/>
</dbReference>
<dbReference type="PANTHER" id="PTHR45962:SF1">
    <property type="entry name" value="N-FATTY-ACYL-AMINO ACID SYNTHASE_HYDROLASE PM20D1"/>
    <property type="match status" value="1"/>
</dbReference>
<dbReference type="Pfam" id="PF07687">
    <property type="entry name" value="M20_dimer"/>
    <property type="match status" value="1"/>
</dbReference>
<dbReference type="Pfam" id="PF01546">
    <property type="entry name" value="Peptidase_M20"/>
    <property type="match status" value="1"/>
</dbReference>
<dbReference type="SUPFAM" id="SSF55031">
    <property type="entry name" value="Bacterial exopeptidase dimerisation domain"/>
    <property type="match status" value="1"/>
</dbReference>
<dbReference type="SUPFAM" id="SSF53187">
    <property type="entry name" value="Zn-dependent exopeptidases"/>
    <property type="match status" value="1"/>
</dbReference>